<accession>B8ECV6</accession>
<evidence type="ECO:0000255" key="1">
    <source>
        <dbReference type="HAMAP-Rule" id="MF_01523"/>
    </source>
</evidence>
<organism>
    <name type="scientific">Shewanella baltica (strain OS223)</name>
    <dbReference type="NCBI Taxonomy" id="407976"/>
    <lineage>
        <taxon>Bacteria</taxon>
        <taxon>Pseudomonadati</taxon>
        <taxon>Pseudomonadota</taxon>
        <taxon>Gammaproteobacteria</taxon>
        <taxon>Alteromonadales</taxon>
        <taxon>Shewanellaceae</taxon>
        <taxon>Shewanella</taxon>
    </lineage>
</organism>
<feature type="chain" id="PRO_1000185125" description="Ribosomal RNA small subunit methyltransferase J">
    <location>
        <begin position="1"/>
        <end position="248"/>
    </location>
</feature>
<feature type="binding site" evidence="1">
    <location>
        <begin position="98"/>
        <end position="99"/>
    </location>
    <ligand>
        <name>S-adenosyl-L-methionine</name>
        <dbReference type="ChEBI" id="CHEBI:59789"/>
    </ligand>
</feature>
<feature type="binding site" evidence="1">
    <location>
        <begin position="114"/>
        <end position="115"/>
    </location>
    <ligand>
        <name>S-adenosyl-L-methionine</name>
        <dbReference type="ChEBI" id="CHEBI:59789"/>
    </ligand>
</feature>
<feature type="binding site" evidence="1">
    <location>
        <begin position="150"/>
        <end position="151"/>
    </location>
    <ligand>
        <name>S-adenosyl-L-methionine</name>
        <dbReference type="ChEBI" id="CHEBI:59789"/>
    </ligand>
</feature>
<feature type="binding site" evidence="1">
    <location>
        <position position="168"/>
    </location>
    <ligand>
        <name>S-adenosyl-L-methionine</name>
        <dbReference type="ChEBI" id="CHEBI:59789"/>
    </ligand>
</feature>
<name>RSMJ_SHEB2</name>
<protein>
    <recommendedName>
        <fullName evidence="1">Ribosomal RNA small subunit methyltransferase J</fullName>
        <ecNumber evidence="1">2.1.1.242</ecNumber>
    </recommendedName>
    <alternativeName>
        <fullName evidence="1">16S rRNA m2G1516 methyltransferase</fullName>
    </alternativeName>
    <alternativeName>
        <fullName evidence="1">rRNA (guanine-N(2)-)-methyltransferase</fullName>
    </alternativeName>
</protein>
<dbReference type="EC" id="2.1.1.242" evidence="1"/>
<dbReference type="EMBL" id="CP001252">
    <property type="protein sequence ID" value="ACK48668.1"/>
    <property type="molecule type" value="Genomic_DNA"/>
</dbReference>
<dbReference type="RefSeq" id="WP_012588899.1">
    <property type="nucleotide sequence ID" value="NC_011663.1"/>
</dbReference>
<dbReference type="SMR" id="B8ECV6"/>
<dbReference type="KEGG" id="sbp:Sbal223_4202"/>
<dbReference type="HOGENOM" id="CLU_076324_0_0_6"/>
<dbReference type="Proteomes" id="UP000002507">
    <property type="component" value="Chromosome"/>
</dbReference>
<dbReference type="GO" id="GO:0005737">
    <property type="term" value="C:cytoplasm"/>
    <property type="evidence" value="ECO:0007669"/>
    <property type="project" value="UniProtKB-SubCell"/>
</dbReference>
<dbReference type="GO" id="GO:0008990">
    <property type="term" value="F:rRNA (guanine-N2-)-methyltransferase activity"/>
    <property type="evidence" value="ECO:0007669"/>
    <property type="project" value="UniProtKB-UniRule"/>
</dbReference>
<dbReference type="CDD" id="cd02440">
    <property type="entry name" value="AdoMet_MTases"/>
    <property type="match status" value="1"/>
</dbReference>
<dbReference type="Gene3D" id="3.40.50.150">
    <property type="entry name" value="Vaccinia Virus protein VP39"/>
    <property type="match status" value="1"/>
</dbReference>
<dbReference type="Gene3D" id="3.40.1630.10">
    <property type="entry name" value="YhiQ-like domain"/>
    <property type="match status" value="1"/>
</dbReference>
<dbReference type="HAMAP" id="MF_01523">
    <property type="entry name" value="16SrRNA_methyltr_J"/>
    <property type="match status" value="1"/>
</dbReference>
<dbReference type="InterPro" id="IPR007536">
    <property type="entry name" value="16SrRNA_methylTrfase_J"/>
</dbReference>
<dbReference type="InterPro" id="IPR029063">
    <property type="entry name" value="SAM-dependent_MTases_sf"/>
</dbReference>
<dbReference type="PANTHER" id="PTHR36112">
    <property type="entry name" value="RIBOSOMAL RNA SMALL SUBUNIT METHYLTRANSFERASE J"/>
    <property type="match status" value="1"/>
</dbReference>
<dbReference type="PANTHER" id="PTHR36112:SF1">
    <property type="entry name" value="RIBOSOMAL RNA SMALL SUBUNIT METHYLTRANSFERASE J"/>
    <property type="match status" value="1"/>
</dbReference>
<dbReference type="Pfam" id="PF04445">
    <property type="entry name" value="SAM_MT"/>
    <property type="match status" value="1"/>
</dbReference>
<dbReference type="SUPFAM" id="SSF53335">
    <property type="entry name" value="S-adenosyl-L-methionine-dependent methyltransferases"/>
    <property type="match status" value="1"/>
</dbReference>
<comment type="function">
    <text evidence="1">Specifically methylates the guanosine in position 1516 of 16S rRNA.</text>
</comment>
<comment type="catalytic activity">
    <reaction evidence="1">
        <text>guanosine(1516) in 16S rRNA + S-adenosyl-L-methionine = N(2)-methylguanosine(1516) in 16S rRNA + S-adenosyl-L-homocysteine + H(+)</text>
        <dbReference type="Rhea" id="RHEA:43220"/>
        <dbReference type="Rhea" id="RHEA-COMP:10412"/>
        <dbReference type="Rhea" id="RHEA-COMP:10413"/>
        <dbReference type="ChEBI" id="CHEBI:15378"/>
        <dbReference type="ChEBI" id="CHEBI:57856"/>
        <dbReference type="ChEBI" id="CHEBI:59789"/>
        <dbReference type="ChEBI" id="CHEBI:74269"/>
        <dbReference type="ChEBI" id="CHEBI:74481"/>
        <dbReference type="EC" id="2.1.1.242"/>
    </reaction>
</comment>
<comment type="subcellular location">
    <subcellularLocation>
        <location evidence="1">Cytoplasm</location>
    </subcellularLocation>
</comment>
<comment type="similarity">
    <text evidence="1">Belongs to the methyltransferase superfamily. RsmJ family.</text>
</comment>
<proteinExistence type="inferred from homology"/>
<keyword id="KW-0963">Cytoplasm</keyword>
<keyword id="KW-0489">Methyltransferase</keyword>
<keyword id="KW-0698">rRNA processing</keyword>
<keyword id="KW-0949">S-adenosyl-L-methionine</keyword>
<keyword id="KW-0808">Transferase</keyword>
<reference key="1">
    <citation type="submission" date="2008-12" db="EMBL/GenBank/DDBJ databases">
        <title>Complete sequence of chromosome of Shewanella baltica OS223.</title>
        <authorList>
            <consortium name="US DOE Joint Genome Institute"/>
            <person name="Lucas S."/>
            <person name="Copeland A."/>
            <person name="Lapidus A."/>
            <person name="Glavina del Rio T."/>
            <person name="Dalin E."/>
            <person name="Tice H."/>
            <person name="Bruce D."/>
            <person name="Goodwin L."/>
            <person name="Pitluck S."/>
            <person name="Chertkov O."/>
            <person name="Meincke L."/>
            <person name="Brettin T."/>
            <person name="Detter J.C."/>
            <person name="Han C."/>
            <person name="Kuske C.R."/>
            <person name="Larimer F."/>
            <person name="Land M."/>
            <person name="Hauser L."/>
            <person name="Kyrpides N."/>
            <person name="Ovchinnikova G."/>
            <person name="Brettar I."/>
            <person name="Rodrigues J."/>
            <person name="Konstantinidis K."/>
            <person name="Tiedje J."/>
        </authorList>
    </citation>
    <scope>NUCLEOTIDE SEQUENCE [LARGE SCALE GENOMIC DNA]</scope>
    <source>
        <strain>OS223</strain>
    </source>
</reference>
<gene>
    <name evidence="1" type="primary">rsmJ</name>
    <name type="ordered locus">Sbal223_4202</name>
</gene>
<sequence>MTPIFFNQQYPTLVDICARWQLVYDANATFELRFESDTLSLHKRDEPKLDGIVVDFVTGAVAHRRKFGGGRGQSIAKAVGLKQGVMPSVVDGTAGLGRDAFVLASLGCTVTMVERHPVVAALLEDGLRRAYQDAEIGDWMRERMRLFHGSSLEALSKLALEVDVVYLDPMYPHRDKSALVKKEMRVFQSLVGADLDADGLLAPALALATKRVVVKRPDYAEDLDGVKPNTVIETKKNRFDVYVKAAMK</sequence>